<name>GLNK3_ARCFU</name>
<protein>
    <recommendedName>
        <fullName evidence="6">Nitrogen regulatory protein GlnK3</fullName>
    </recommendedName>
</protein>
<keyword id="KW-0002">3D-structure</keyword>
<keyword id="KW-0067">ATP-binding</keyword>
<keyword id="KW-0963">Cytoplasm</keyword>
<keyword id="KW-0547">Nucleotide-binding</keyword>
<keyword id="KW-1185">Reference proteome</keyword>
<accession>O28524</accession>
<sequence>MRRLPTREVVDMKMVVAVIRPEKLECVKKALEERGFVGMTVTEVKGRGEQKGIRLQFRGREVEVDLLQKTKVEVVVSDDAVDEVVEAIVSSARTGKFGDGRIFVIPVEKSVKIRTGDEEV</sequence>
<dbReference type="EMBL" id="AE000782">
    <property type="protein sequence ID" value="AAB89500.1"/>
    <property type="molecule type" value="Genomic_DNA"/>
</dbReference>
<dbReference type="PIR" id="E69468">
    <property type="entry name" value="E69468"/>
</dbReference>
<dbReference type="PDB" id="3T9Z">
    <property type="method" value="X-ray"/>
    <property type="resolution" value="1.82 A"/>
    <property type="chains" value="A/B/C/D/E/F=12-120"/>
</dbReference>
<dbReference type="PDB" id="3TA0">
    <property type="method" value="X-ray"/>
    <property type="resolution" value="2.30 A"/>
    <property type="chains" value="A/B/C/D/E/F=12-120"/>
</dbReference>
<dbReference type="PDB" id="3TA1">
    <property type="method" value="X-ray"/>
    <property type="resolution" value="1.90 A"/>
    <property type="chains" value="A/B/C/D/E/F=12-120"/>
</dbReference>
<dbReference type="PDB" id="3TA2">
    <property type="method" value="X-ray"/>
    <property type="resolution" value="1.90 A"/>
    <property type="chains" value="A/B/C=12-120"/>
</dbReference>
<dbReference type="PDBsum" id="3T9Z"/>
<dbReference type="PDBsum" id="3TA0"/>
<dbReference type="PDBsum" id="3TA1"/>
<dbReference type="PDBsum" id="3TA2"/>
<dbReference type="SMR" id="O28524"/>
<dbReference type="STRING" id="224325.AF_1750"/>
<dbReference type="PaxDb" id="224325-AF_1750"/>
<dbReference type="EnsemblBacteria" id="AAB89500">
    <property type="protein sequence ID" value="AAB89500"/>
    <property type="gene ID" value="AF_1750"/>
</dbReference>
<dbReference type="KEGG" id="afu:AF_1750"/>
<dbReference type="eggNOG" id="arCOG02305">
    <property type="taxonomic scope" value="Archaea"/>
</dbReference>
<dbReference type="HOGENOM" id="CLU_082268_0_1_2"/>
<dbReference type="PhylomeDB" id="O28524"/>
<dbReference type="EvolutionaryTrace" id="O28524"/>
<dbReference type="Proteomes" id="UP000002199">
    <property type="component" value="Chromosome"/>
</dbReference>
<dbReference type="GO" id="GO:0005829">
    <property type="term" value="C:cytosol"/>
    <property type="evidence" value="ECO:0007669"/>
    <property type="project" value="TreeGrafter"/>
</dbReference>
<dbReference type="GO" id="GO:0005524">
    <property type="term" value="F:ATP binding"/>
    <property type="evidence" value="ECO:0007669"/>
    <property type="project" value="UniProtKB-KW"/>
</dbReference>
<dbReference type="GO" id="GO:0030234">
    <property type="term" value="F:enzyme regulator activity"/>
    <property type="evidence" value="ECO:0007669"/>
    <property type="project" value="InterPro"/>
</dbReference>
<dbReference type="GO" id="GO:0006808">
    <property type="term" value="P:regulation of nitrogen utilization"/>
    <property type="evidence" value="ECO:0007669"/>
    <property type="project" value="InterPro"/>
</dbReference>
<dbReference type="Gene3D" id="3.30.70.120">
    <property type="match status" value="1"/>
</dbReference>
<dbReference type="InterPro" id="IPR002187">
    <property type="entry name" value="N-reg_PII"/>
</dbReference>
<dbReference type="InterPro" id="IPR011322">
    <property type="entry name" value="N-reg_PII-like_a/b"/>
</dbReference>
<dbReference type="InterPro" id="IPR015867">
    <property type="entry name" value="N-reg_PII/ATP_PRibTrfase_C"/>
</dbReference>
<dbReference type="InterPro" id="IPR017918">
    <property type="entry name" value="N-reg_PII_CS"/>
</dbReference>
<dbReference type="PANTHER" id="PTHR30115">
    <property type="entry name" value="NITROGEN REGULATORY PROTEIN P-II"/>
    <property type="match status" value="1"/>
</dbReference>
<dbReference type="PANTHER" id="PTHR30115:SF11">
    <property type="entry name" value="NITROGEN REGULATORY PROTEIN P-II HOMOLOG"/>
    <property type="match status" value="1"/>
</dbReference>
<dbReference type="Pfam" id="PF00543">
    <property type="entry name" value="P-II"/>
    <property type="match status" value="1"/>
</dbReference>
<dbReference type="PRINTS" id="PR00340">
    <property type="entry name" value="PIIGLNB"/>
</dbReference>
<dbReference type="SMART" id="SM00938">
    <property type="entry name" value="P-II"/>
    <property type="match status" value="1"/>
</dbReference>
<dbReference type="SUPFAM" id="SSF54913">
    <property type="entry name" value="GlnB-like"/>
    <property type="match status" value="1"/>
</dbReference>
<dbReference type="PROSITE" id="PS00638">
    <property type="entry name" value="PII_GLNB_CTER"/>
    <property type="match status" value="1"/>
</dbReference>
<dbReference type="PROSITE" id="PS51343">
    <property type="entry name" value="PII_GLNB_DOM"/>
    <property type="match status" value="1"/>
</dbReference>
<feature type="chain" id="PRO_0000453014" description="Nitrogen regulatory protein GlnK3">
    <location>
        <begin position="1"/>
        <end position="120"/>
    </location>
</feature>
<feature type="binding site" evidence="4 11">
    <location>
        <position position="40"/>
    </location>
    <ligand>
        <name>ADP</name>
        <dbReference type="ChEBI" id="CHEBI:456216"/>
    </ligand>
</feature>
<feature type="binding site" evidence="4 10 12">
    <location>
        <position position="40"/>
    </location>
    <ligand>
        <name>ATP</name>
        <dbReference type="ChEBI" id="CHEBI:30616"/>
    </ligand>
</feature>
<feature type="binding site" evidence="4 12">
    <location>
        <begin position="48"/>
        <end position="52"/>
    </location>
    <ligand>
        <name>2-oxoglutarate</name>
        <dbReference type="ChEBI" id="CHEBI:16810"/>
    </ligand>
</feature>
<feature type="binding site" evidence="4 11">
    <location>
        <begin position="48"/>
        <end position="50"/>
    </location>
    <ligand>
        <name>ADP</name>
        <dbReference type="ChEBI" id="CHEBI:456216"/>
    </ligand>
</feature>
<feature type="binding site" evidence="4 10 12">
    <location>
        <begin position="48"/>
        <end position="50"/>
    </location>
    <ligand>
        <name>ATP</name>
        <dbReference type="ChEBI" id="CHEBI:30616"/>
    </ligand>
</feature>
<feature type="binding site" evidence="4 12">
    <location>
        <position position="69"/>
    </location>
    <ligand>
        <name>2-oxoglutarate</name>
        <dbReference type="ChEBI" id="CHEBI:16810"/>
    </ligand>
</feature>
<feature type="binding site" evidence="4 11">
    <location>
        <position position="75"/>
    </location>
    <ligand>
        <name>ADP</name>
        <dbReference type="ChEBI" id="CHEBI:456216"/>
    </ligand>
</feature>
<feature type="binding site" evidence="4 10 12">
    <location>
        <position position="75"/>
    </location>
    <ligand>
        <name>ATP</name>
        <dbReference type="ChEBI" id="CHEBI:30616"/>
    </ligand>
</feature>
<feature type="binding site" evidence="4 11">
    <location>
        <begin position="98"/>
        <end position="101"/>
    </location>
    <ligand>
        <name>ADP</name>
        <dbReference type="ChEBI" id="CHEBI:456216"/>
    </ligand>
</feature>
<feature type="binding site" evidence="4 10 12">
    <location>
        <begin position="98"/>
        <end position="101"/>
    </location>
    <ligand>
        <name>ATP</name>
        <dbReference type="ChEBI" id="CHEBI:30616"/>
    </ligand>
</feature>
<feature type="binding site" evidence="4 12">
    <location>
        <position position="98"/>
    </location>
    <ligand>
        <name>2-oxoglutarate</name>
        <dbReference type="ChEBI" id="CHEBI:16810"/>
    </ligand>
</feature>
<feature type="mutagenesis site" description="Retains the ability to bind 2-oxoglutarate." evidence="4">
    <original>F</original>
    <variation>I</variation>
    <variation>P</variation>
    <location>
        <position position="97"/>
    </location>
</feature>
<feature type="strand" evidence="13">
    <location>
        <begin position="13"/>
        <end position="19"/>
    </location>
</feature>
<feature type="helix" evidence="13">
    <location>
        <begin position="21"/>
        <end position="23"/>
    </location>
</feature>
<feature type="helix" evidence="13">
    <location>
        <begin position="24"/>
        <end position="33"/>
    </location>
</feature>
<feature type="strand" evidence="13">
    <location>
        <begin position="39"/>
        <end position="47"/>
    </location>
</feature>
<feature type="strand" evidence="14">
    <location>
        <begin position="52"/>
        <end position="57"/>
    </location>
</feature>
<feature type="strand" evidence="14">
    <location>
        <begin position="60"/>
        <end position="64"/>
    </location>
</feature>
<feature type="strand" evidence="13">
    <location>
        <begin position="67"/>
        <end position="76"/>
    </location>
</feature>
<feature type="helix" evidence="13">
    <location>
        <begin position="78"/>
        <end position="80"/>
    </location>
</feature>
<feature type="helix" evidence="13">
    <location>
        <begin position="81"/>
        <end position="92"/>
    </location>
</feature>
<feature type="strand" evidence="13">
    <location>
        <begin position="101"/>
        <end position="106"/>
    </location>
</feature>
<feature type="strand" evidence="13">
    <location>
        <begin position="109"/>
        <end position="112"/>
    </location>
</feature>
<feature type="turn" evidence="13">
    <location>
        <begin position="113"/>
        <end position="115"/>
    </location>
</feature>
<feature type="strand" evidence="13">
    <location>
        <begin position="118"/>
        <end position="120"/>
    </location>
</feature>
<comment type="function">
    <text evidence="2 7">Involved in the regulation of nitrogen metabolism (By similarity). Regulates the activity of its targets by protein-protein interaction in response to the nitrogen status of the cell (By similarity). Regulates the activity of the ammonia channel Amt3 via direct interaction (Probable).</text>
</comment>
<comment type="activity regulation">
    <text evidence="4">Activity is influenced by intracellular pools of the effector molecules ATP, ADP and 2-oxoglutarate. It senses the cellular nitrogen status through 2-oxoglutarate, and the energy level of the cell by binding both ATP and ADP with different affinities. ATP and 2-oxoglutarate prohibit binding to Amt3. ADP promotes the complex formation.</text>
</comment>
<comment type="subunit">
    <text evidence="2 4">Homotrimer (PubMed:22039461). Interacts and forms a complex with Amt3 (By similarity).</text>
</comment>
<comment type="subcellular location">
    <subcellularLocation>
        <location evidence="1">Cytoplasm</location>
    </subcellularLocation>
</comment>
<comment type="domain">
    <text evidence="4">Undergoes conformational changes upon binding of effector molecules.</text>
</comment>
<comment type="similarity">
    <text evidence="3">Belongs to the P(II) protein family.</text>
</comment>
<gene>
    <name evidence="5" type="primary">glnK3</name>
    <name evidence="8" type="ordered locus">AF_1750</name>
</gene>
<proteinExistence type="evidence at protein level"/>
<reference key="1">
    <citation type="journal article" date="1997" name="Nature">
        <title>The complete genome sequence of the hyperthermophilic, sulphate-reducing archaeon Archaeoglobus fulgidus.</title>
        <authorList>
            <person name="Klenk H.-P."/>
            <person name="Clayton R.A."/>
            <person name="Tomb J.-F."/>
            <person name="White O."/>
            <person name="Nelson K.E."/>
            <person name="Ketchum K.A."/>
            <person name="Dodson R.J."/>
            <person name="Gwinn M.L."/>
            <person name="Hickey E.K."/>
            <person name="Peterson J.D."/>
            <person name="Richardson D.L."/>
            <person name="Kerlavage A.R."/>
            <person name="Graham D.E."/>
            <person name="Kyrpides N.C."/>
            <person name="Fleischmann R.D."/>
            <person name="Quackenbush J."/>
            <person name="Lee N.H."/>
            <person name="Sutton G.G."/>
            <person name="Gill S.R."/>
            <person name="Kirkness E.F."/>
            <person name="Dougherty B.A."/>
            <person name="McKenney K."/>
            <person name="Adams M.D."/>
            <person name="Loftus B.J."/>
            <person name="Peterson S.N."/>
            <person name="Reich C.I."/>
            <person name="McNeil L.K."/>
            <person name="Badger J.H."/>
            <person name="Glodek A."/>
            <person name="Zhou L."/>
            <person name="Overbeek R."/>
            <person name="Gocayne J.D."/>
            <person name="Weidman J.F."/>
            <person name="McDonald L.A."/>
            <person name="Utterback T.R."/>
            <person name="Cotton M.D."/>
            <person name="Spriggs T."/>
            <person name="Artiach P."/>
            <person name="Kaine B.P."/>
            <person name="Sykes S.M."/>
            <person name="Sadow P.W."/>
            <person name="D'Andrea K.P."/>
            <person name="Bowman C."/>
            <person name="Fujii C."/>
            <person name="Garland S.A."/>
            <person name="Mason T.M."/>
            <person name="Olsen G.J."/>
            <person name="Fraser C.M."/>
            <person name="Smith H.O."/>
            <person name="Woese C.R."/>
            <person name="Venter J.C."/>
        </authorList>
    </citation>
    <scope>NUCLEOTIDE SEQUENCE [LARGE SCALE GENOMIC DNA]</scope>
    <source>
        <strain>ATCC 49558 / DSM 4304 / JCM 9628 / NBRC 100126 / VC-16</strain>
    </source>
</reference>
<reference evidence="9 10 11 12" key="2">
    <citation type="journal article" date="2011" name="PLoS ONE">
        <title>Mechanism of disruption of the Amt-GlnK complex by P(II)-mediated sensing of 2-oxoglutarate.</title>
        <authorList>
            <person name="Maier S."/>
            <person name="Schleberger P."/>
            <person name="Lu W."/>
            <person name="Wacker T."/>
            <person name="Pfluger T."/>
            <person name="Litz C."/>
            <person name="Andrade S.L."/>
        </authorList>
    </citation>
    <scope>X-RAY CRYSTALLOGRAPHY (1.82 ANGSTROMS) OF 12-120 IN COMPLEXES WITH 2-OXOGLUTARATE; ADP AND ATP</scope>
    <scope>FUNCTION</scope>
    <scope>ACTIVITY REGULATION</scope>
    <scope>SUBUNIT</scope>
    <scope>DOMAIN</scope>
    <scope>MUTAGENESIS OF PHE-97</scope>
</reference>
<evidence type="ECO:0000250" key="1">
    <source>
        <dbReference type="UniProtKB" id="B8ZYW0"/>
    </source>
</evidence>
<evidence type="ECO:0000250" key="2">
    <source>
        <dbReference type="UniProtKB" id="Q60381"/>
    </source>
</evidence>
<evidence type="ECO:0000255" key="3">
    <source>
        <dbReference type="PROSITE-ProRule" id="PRU00675"/>
    </source>
</evidence>
<evidence type="ECO:0000269" key="4">
    <source>
    </source>
</evidence>
<evidence type="ECO:0000303" key="5">
    <source>
    </source>
</evidence>
<evidence type="ECO:0000305" key="6"/>
<evidence type="ECO:0000305" key="7">
    <source>
    </source>
</evidence>
<evidence type="ECO:0000312" key="8">
    <source>
        <dbReference type="EMBL" id="AAB89500.1"/>
    </source>
</evidence>
<evidence type="ECO:0007744" key="9">
    <source>
        <dbReference type="PDB" id="3T9Z"/>
    </source>
</evidence>
<evidence type="ECO:0007744" key="10">
    <source>
        <dbReference type="PDB" id="3TA0"/>
    </source>
</evidence>
<evidence type="ECO:0007744" key="11">
    <source>
        <dbReference type="PDB" id="3TA1"/>
    </source>
</evidence>
<evidence type="ECO:0007744" key="12">
    <source>
        <dbReference type="PDB" id="3TA2"/>
    </source>
</evidence>
<evidence type="ECO:0007829" key="13">
    <source>
        <dbReference type="PDB" id="3T9Z"/>
    </source>
</evidence>
<evidence type="ECO:0007829" key="14">
    <source>
        <dbReference type="PDB" id="3TA2"/>
    </source>
</evidence>
<organism>
    <name type="scientific">Archaeoglobus fulgidus (strain ATCC 49558 / DSM 4304 / JCM 9628 / NBRC 100126 / VC-16)</name>
    <dbReference type="NCBI Taxonomy" id="224325"/>
    <lineage>
        <taxon>Archaea</taxon>
        <taxon>Methanobacteriati</taxon>
        <taxon>Methanobacteriota</taxon>
        <taxon>Archaeoglobi</taxon>
        <taxon>Archaeoglobales</taxon>
        <taxon>Archaeoglobaceae</taxon>
        <taxon>Archaeoglobus</taxon>
    </lineage>
</organism>